<accession>Q7MNZ4</accession>
<protein>
    <recommendedName>
        <fullName evidence="1">Undecaprenyl-diphosphatase</fullName>
        <ecNumber evidence="1">3.6.1.27</ecNumber>
    </recommendedName>
    <alternativeName>
        <fullName evidence="1">Bacitracin resistance protein</fullName>
    </alternativeName>
    <alternativeName>
        <fullName evidence="1">Undecaprenyl pyrophosphate phosphatase</fullName>
    </alternativeName>
</protein>
<comment type="function">
    <text evidence="1">Catalyzes the dephosphorylation of undecaprenyl diphosphate (UPP). Confers resistance to bacitracin.</text>
</comment>
<comment type="catalytic activity">
    <reaction evidence="1">
        <text>di-trans,octa-cis-undecaprenyl diphosphate + H2O = di-trans,octa-cis-undecaprenyl phosphate + phosphate + H(+)</text>
        <dbReference type="Rhea" id="RHEA:28094"/>
        <dbReference type="ChEBI" id="CHEBI:15377"/>
        <dbReference type="ChEBI" id="CHEBI:15378"/>
        <dbReference type="ChEBI" id="CHEBI:43474"/>
        <dbReference type="ChEBI" id="CHEBI:58405"/>
        <dbReference type="ChEBI" id="CHEBI:60392"/>
        <dbReference type="EC" id="3.6.1.27"/>
    </reaction>
</comment>
<comment type="subcellular location">
    <subcellularLocation>
        <location evidence="1">Cell inner membrane</location>
        <topology evidence="1">Multi-pass membrane protein</topology>
    </subcellularLocation>
</comment>
<comment type="miscellaneous">
    <text>Bacitracin is thought to be involved in the inhibition of peptidoglycan synthesis by sequestering undecaprenyl diphosphate, thereby reducing the pool of lipid carrier available.</text>
</comment>
<comment type="similarity">
    <text evidence="1">Belongs to the UppP family.</text>
</comment>
<gene>
    <name evidence="1" type="primary">uppP</name>
    <name type="synonym">bacA</name>
    <name type="synonym">upk</name>
    <name type="ordered locus">VV0570</name>
</gene>
<name>UPPP_VIBVY</name>
<reference key="1">
    <citation type="journal article" date="2003" name="Genome Res.">
        <title>Comparative genome analysis of Vibrio vulnificus, a marine pathogen.</title>
        <authorList>
            <person name="Chen C.-Y."/>
            <person name="Wu K.-M."/>
            <person name="Chang Y.-C."/>
            <person name="Chang C.-H."/>
            <person name="Tsai H.-C."/>
            <person name="Liao T.-L."/>
            <person name="Liu Y.-M."/>
            <person name="Chen H.-J."/>
            <person name="Shen A.B.-T."/>
            <person name="Li J.-C."/>
            <person name="Su T.-L."/>
            <person name="Shao C.-P."/>
            <person name="Lee C.-T."/>
            <person name="Hor L.-I."/>
            <person name="Tsai S.-F."/>
        </authorList>
    </citation>
    <scope>NUCLEOTIDE SEQUENCE [LARGE SCALE GENOMIC DNA]</scope>
    <source>
        <strain>YJ016</strain>
    </source>
</reference>
<feature type="chain" id="PRO_0000151238" description="Undecaprenyl-diphosphatase">
    <location>
        <begin position="1"/>
        <end position="267"/>
    </location>
</feature>
<feature type="transmembrane region" description="Helical" evidence="1">
    <location>
        <begin position="1"/>
        <end position="21"/>
    </location>
</feature>
<feature type="transmembrane region" description="Helical" evidence="1">
    <location>
        <begin position="39"/>
        <end position="59"/>
    </location>
</feature>
<feature type="transmembrane region" description="Helical" evidence="1">
    <location>
        <begin position="83"/>
        <end position="103"/>
    </location>
</feature>
<feature type="transmembrane region" description="Helical" evidence="1">
    <location>
        <begin position="111"/>
        <end position="131"/>
    </location>
</feature>
<feature type="transmembrane region" description="Helical" evidence="1">
    <location>
        <begin position="144"/>
        <end position="164"/>
    </location>
</feature>
<feature type="transmembrane region" description="Helical" evidence="1">
    <location>
        <begin position="189"/>
        <end position="209"/>
    </location>
</feature>
<feature type="transmembrane region" description="Helical" evidence="1">
    <location>
        <begin position="218"/>
        <end position="238"/>
    </location>
</feature>
<feature type="transmembrane region" description="Helical" evidence="1">
    <location>
        <begin position="246"/>
        <end position="266"/>
    </location>
</feature>
<evidence type="ECO:0000255" key="1">
    <source>
        <dbReference type="HAMAP-Rule" id="MF_01006"/>
    </source>
</evidence>
<proteinExistence type="inferred from homology"/>
<dbReference type="EC" id="3.6.1.27" evidence="1"/>
<dbReference type="EMBL" id="BA000037">
    <property type="protein sequence ID" value="BAC93334.1"/>
    <property type="molecule type" value="Genomic_DNA"/>
</dbReference>
<dbReference type="RefSeq" id="WP_011078706.1">
    <property type="nucleotide sequence ID" value="NC_005139.1"/>
</dbReference>
<dbReference type="SMR" id="Q7MNZ4"/>
<dbReference type="STRING" id="672.VV93_v1c05120"/>
<dbReference type="KEGG" id="vvy:VV0570"/>
<dbReference type="eggNOG" id="COG1968">
    <property type="taxonomic scope" value="Bacteria"/>
</dbReference>
<dbReference type="HOGENOM" id="CLU_060296_1_0_6"/>
<dbReference type="Proteomes" id="UP000002675">
    <property type="component" value="Chromosome I"/>
</dbReference>
<dbReference type="GO" id="GO:0005886">
    <property type="term" value="C:plasma membrane"/>
    <property type="evidence" value="ECO:0007669"/>
    <property type="project" value="UniProtKB-SubCell"/>
</dbReference>
<dbReference type="GO" id="GO:0050380">
    <property type="term" value="F:undecaprenyl-diphosphatase activity"/>
    <property type="evidence" value="ECO:0007669"/>
    <property type="project" value="UniProtKB-UniRule"/>
</dbReference>
<dbReference type="GO" id="GO:0071555">
    <property type="term" value="P:cell wall organization"/>
    <property type="evidence" value="ECO:0007669"/>
    <property type="project" value="UniProtKB-KW"/>
</dbReference>
<dbReference type="GO" id="GO:0009252">
    <property type="term" value="P:peptidoglycan biosynthetic process"/>
    <property type="evidence" value="ECO:0007669"/>
    <property type="project" value="UniProtKB-KW"/>
</dbReference>
<dbReference type="GO" id="GO:0008360">
    <property type="term" value="P:regulation of cell shape"/>
    <property type="evidence" value="ECO:0007669"/>
    <property type="project" value="UniProtKB-KW"/>
</dbReference>
<dbReference type="GO" id="GO:0046677">
    <property type="term" value="P:response to antibiotic"/>
    <property type="evidence" value="ECO:0007669"/>
    <property type="project" value="UniProtKB-UniRule"/>
</dbReference>
<dbReference type="HAMAP" id="MF_01006">
    <property type="entry name" value="Undec_diphosphatase"/>
    <property type="match status" value="1"/>
</dbReference>
<dbReference type="InterPro" id="IPR003824">
    <property type="entry name" value="UppP"/>
</dbReference>
<dbReference type="NCBIfam" id="NF001393">
    <property type="entry name" value="PRK00281.2-4"/>
    <property type="match status" value="1"/>
</dbReference>
<dbReference type="NCBIfam" id="TIGR00753">
    <property type="entry name" value="undec_PP_bacA"/>
    <property type="match status" value="1"/>
</dbReference>
<dbReference type="PANTHER" id="PTHR30622">
    <property type="entry name" value="UNDECAPRENYL-DIPHOSPHATASE"/>
    <property type="match status" value="1"/>
</dbReference>
<dbReference type="PANTHER" id="PTHR30622:SF4">
    <property type="entry name" value="UNDECAPRENYL-DIPHOSPHATASE"/>
    <property type="match status" value="1"/>
</dbReference>
<dbReference type="Pfam" id="PF02673">
    <property type="entry name" value="BacA"/>
    <property type="match status" value="1"/>
</dbReference>
<sequence>MSYFEAFVLALIQGLTEFLPISSSAHLILPSAILGWEDQGLAFDVAVHVGTLAAVVIYFRKEVITLFAALFASIFKGERSKEAKLAWMIVIATIPACIFGLVMKDVIEVYLRSAYVIATTTIIFGLLLWWVDKNASLLDDEYQAGWKKALFIGIAQALAMIPGTSRSGATITAALYLGFTREAAARFSFLMSIPIITLAGSYLGLKLVTSGEPVHVGFLLTGIVTSFISAYLCIHLFLKMISRMGMTPFVIYRLILGVGLFAYLLMA</sequence>
<organism>
    <name type="scientific">Vibrio vulnificus (strain YJ016)</name>
    <dbReference type="NCBI Taxonomy" id="196600"/>
    <lineage>
        <taxon>Bacteria</taxon>
        <taxon>Pseudomonadati</taxon>
        <taxon>Pseudomonadota</taxon>
        <taxon>Gammaproteobacteria</taxon>
        <taxon>Vibrionales</taxon>
        <taxon>Vibrionaceae</taxon>
        <taxon>Vibrio</taxon>
    </lineage>
</organism>
<keyword id="KW-0046">Antibiotic resistance</keyword>
<keyword id="KW-0997">Cell inner membrane</keyword>
<keyword id="KW-1003">Cell membrane</keyword>
<keyword id="KW-0133">Cell shape</keyword>
<keyword id="KW-0961">Cell wall biogenesis/degradation</keyword>
<keyword id="KW-0378">Hydrolase</keyword>
<keyword id="KW-0472">Membrane</keyword>
<keyword id="KW-0573">Peptidoglycan synthesis</keyword>
<keyword id="KW-0812">Transmembrane</keyword>
<keyword id="KW-1133">Transmembrane helix</keyword>